<dbReference type="EC" id="2.4.1.80" evidence="8"/>
<dbReference type="EMBL" id="DS231665">
    <property type="protein sequence ID" value="ESU11990.1"/>
    <property type="molecule type" value="Genomic_DNA"/>
</dbReference>
<dbReference type="EMBL" id="HG970334">
    <property type="protein sequence ID" value="CEF88776.1"/>
    <property type="molecule type" value="Genomic_DNA"/>
</dbReference>
<dbReference type="RefSeq" id="XP_011324566.1">
    <property type="nucleotide sequence ID" value="XM_011326264.1"/>
</dbReference>
<dbReference type="STRING" id="229533.I1RPI4"/>
<dbReference type="GeneID" id="23553106"/>
<dbReference type="KEGG" id="fgr:FGSG_05955"/>
<dbReference type="VEuPathDB" id="FungiDB:FGRAMPH1_01G19155"/>
<dbReference type="eggNOG" id="KOG2547">
    <property type="taxonomic scope" value="Eukaryota"/>
</dbReference>
<dbReference type="HOGENOM" id="CLU_030898_1_0_1"/>
<dbReference type="InParanoid" id="I1RPI4"/>
<dbReference type="OrthoDB" id="117230at110618"/>
<dbReference type="UniPathway" id="UPA00222"/>
<dbReference type="PHI-base" id="PHI:1002"/>
<dbReference type="Proteomes" id="UP000070720">
    <property type="component" value="Chromosome 3"/>
</dbReference>
<dbReference type="GO" id="GO:0000139">
    <property type="term" value="C:Golgi membrane"/>
    <property type="evidence" value="ECO:0007669"/>
    <property type="project" value="UniProtKB-SubCell"/>
</dbReference>
<dbReference type="GO" id="GO:0008120">
    <property type="term" value="F:ceramide glucosyltransferase activity"/>
    <property type="evidence" value="ECO:0007669"/>
    <property type="project" value="UniProtKB-EC"/>
</dbReference>
<dbReference type="GO" id="GO:0006679">
    <property type="term" value="P:glucosylceramide biosynthetic process"/>
    <property type="evidence" value="ECO:0007669"/>
    <property type="project" value="TreeGrafter"/>
</dbReference>
<dbReference type="Gene3D" id="3.90.550.10">
    <property type="entry name" value="Spore Coat Polysaccharide Biosynthesis Protein SpsA, Chain A"/>
    <property type="match status" value="1"/>
</dbReference>
<dbReference type="InterPro" id="IPR025993">
    <property type="entry name" value="Ceramide_glucosylTrfase"/>
</dbReference>
<dbReference type="InterPro" id="IPR029044">
    <property type="entry name" value="Nucleotide-diphossugar_trans"/>
</dbReference>
<dbReference type="PANTHER" id="PTHR12726">
    <property type="entry name" value="CERAMIDE GLUCOSYLTRANSFERASE"/>
    <property type="match status" value="1"/>
</dbReference>
<dbReference type="PANTHER" id="PTHR12726:SF0">
    <property type="entry name" value="CERAMIDE GLUCOSYLTRANSFERASE"/>
    <property type="match status" value="1"/>
</dbReference>
<dbReference type="Pfam" id="PF13506">
    <property type="entry name" value="Glyco_transf_21"/>
    <property type="match status" value="1"/>
</dbReference>
<dbReference type="SUPFAM" id="SSF53448">
    <property type="entry name" value="Nucleotide-diphospho-sugar transferases"/>
    <property type="match status" value="1"/>
</dbReference>
<sequence length="528" mass="59553">MYSFIECIAGALFVLGCVVVTLVVIGVRALLYNFRNRPAPPLSSQLGQNAPHVTIIRPVKGLEPRLYDCIAASFRQDYPQDKVSIRLCLEDDTDPAYPVLQKVIEDFPTIDARIMLEKEDHVLSETVNMGPNPKIRNLSRAYREAKGDIVWIIDCNIWMAKGVLGRMVDKLMGYRVGGAAKPYKFVHQLPIVVDLMDFSTSLAAEGRSLLDASPEEDHPTEDLGAEEFPKVMSHGGGRIDEMFMTTSHAKFYSAINTLRAAPCAVGKSNMFRKSQLDQATDAILNPKLDQSKNLPTGVDYFSHNICEDHLIGEALWTTDFPGYKSHGLVWGDIAVQPVSGMSVQAYTARRSRWLRARKYTVLSATILEPFTECFLFATYMSLAMTTIPVLSQNLGIPKTWNATAIAWFTITTLWMLIDYIGYLRLHSGVTMEVDEHTPYFAKGFKNTGGIKRRPFLEFLAAWIGREGLAFPVWAYAVVFGNTVNWRGRLFYIHWDTTVDAVEPREERTREVRTPELERGPSRNKHRVD</sequence>
<reference key="1">
    <citation type="journal article" date="2007" name="Science">
        <title>The Fusarium graminearum genome reveals a link between localized polymorphism and pathogen specialization.</title>
        <authorList>
            <person name="Cuomo C.A."/>
            <person name="Gueldener U."/>
            <person name="Xu J.-R."/>
            <person name="Trail F."/>
            <person name="Turgeon B.G."/>
            <person name="Di Pietro A."/>
            <person name="Walton J.D."/>
            <person name="Ma L.-J."/>
            <person name="Baker S.E."/>
            <person name="Rep M."/>
            <person name="Adam G."/>
            <person name="Antoniw J."/>
            <person name="Baldwin T."/>
            <person name="Calvo S.E."/>
            <person name="Chang Y.-L."/>
            <person name="DeCaprio D."/>
            <person name="Gale L.R."/>
            <person name="Gnerre S."/>
            <person name="Goswami R.S."/>
            <person name="Hammond-Kosack K."/>
            <person name="Harris L.J."/>
            <person name="Hilburn K."/>
            <person name="Kennell J.C."/>
            <person name="Kroken S."/>
            <person name="Magnuson J.K."/>
            <person name="Mannhaupt G."/>
            <person name="Mauceli E.W."/>
            <person name="Mewes H.-W."/>
            <person name="Mitterbauer R."/>
            <person name="Muehlbauer G."/>
            <person name="Muensterkoetter M."/>
            <person name="Nelson D."/>
            <person name="O'Donnell K."/>
            <person name="Ouellet T."/>
            <person name="Qi W."/>
            <person name="Quesneville H."/>
            <person name="Roncero M.I.G."/>
            <person name="Seong K.-Y."/>
            <person name="Tetko I.V."/>
            <person name="Urban M."/>
            <person name="Waalwijk C."/>
            <person name="Ward T.J."/>
            <person name="Yao J."/>
            <person name="Birren B.W."/>
            <person name="Kistler H.C."/>
        </authorList>
    </citation>
    <scope>NUCLEOTIDE SEQUENCE [LARGE SCALE GENOMIC DNA]</scope>
    <source>
        <strain>ATCC MYA-4620 / CBS 123657 / FGSC 9075 / NRRL 31084 / PH-1</strain>
    </source>
</reference>
<reference key="2">
    <citation type="journal article" date="2010" name="Nature">
        <title>Comparative genomics reveals mobile pathogenicity chromosomes in Fusarium.</title>
        <authorList>
            <person name="Ma L.-J."/>
            <person name="van der Does H.C."/>
            <person name="Borkovich K.A."/>
            <person name="Coleman J.J."/>
            <person name="Daboussi M.-J."/>
            <person name="Di Pietro A."/>
            <person name="Dufresne M."/>
            <person name="Freitag M."/>
            <person name="Grabherr M."/>
            <person name="Henrissat B."/>
            <person name="Houterman P.M."/>
            <person name="Kang S."/>
            <person name="Shim W.-B."/>
            <person name="Woloshuk C."/>
            <person name="Xie X."/>
            <person name="Xu J.-R."/>
            <person name="Antoniw J."/>
            <person name="Baker S.E."/>
            <person name="Bluhm B.H."/>
            <person name="Breakspear A."/>
            <person name="Brown D.W."/>
            <person name="Butchko R.A.E."/>
            <person name="Chapman S."/>
            <person name="Coulson R."/>
            <person name="Coutinho P.M."/>
            <person name="Danchin E.G.J."/>
            <person name="Diener A."/>
            <person name="Gale L.R."/>
            <person name="Gardiner D.M."/>
            <person name="Goff S."/>
            <person name="Hammond-Kosack K.E."/>
            <person name="Hilburn K."/>
            <person name="Hua-Van A."/>
            <person name="Jonkers W."/>
            <person name="Kazan K."/>
            <person name="Kodira C.D."/>
            <person name="Koehrsen M."/>
            <person name="Kumar L."/>
            <person name="Lee Y.-H."/>
            <person name="Li L."/>
            <person name="Manners J.M."/>
            <person name="Miranda-Saavedra D."/>
            <person name="Mukherjee M."/>
            <person name="Park G."/>
            <person name="Park J."/>
            <person name="Park S.-Y."/>
            <person name="Proctor R.H."/>
            <person name="Regev A."/>
            <person name="Ruiz-Roldan M.C."/>
            <person name="Sain D."/>
            <person name="Sakthikumar S."/>
            <person name="Sykes S."/>
            <person name="Schwartz D.C."/>
            <person name="Turgeon B.G."/>
            <person name="Wapinski I."/>
            <person name="Yoder O."/>
            <person name="Young S."/>
            <person name="Zeng Q."/>
            <person name="Zhou S."/>
            <person name="Galagan J."/>
            <person name="Cuomo C.A."/>
            <person name="Kistler H.C."/>
            <person name="Rep M."/>
        </authorList>
    </citation>
    <scope>GENOME REANNOTATION</scope>
    <source>
        <strain>ATCC MYA-4620 / CBS 123657 / FGSC 9075 / NRRL 31084 / PH-1</strain>
    </source>
</reference>
<reference key="3">
    <citation type="journal article" date="2015" name="BMC Genomics">
        <title>The completed genome sequence of the pathogenic ascomycete fungus Fusarium graminearum.</title>
        <authorList>
            <person name="King R."/>
            <person name="Urban M."/>
            <person name="Hammond-Kosack M.C.U."/>
            <person name="Hassani-Pak K."/>
            <person name="Hammond-Kosack K.E."/>
        </authorList>
    </citation>
    <scope>NUCLEOTIDE SEQUENCE [LARGE SCALE GENOMIC DNA]</scope>
    <source>
        <strain>ATCC MYA-4620 / CBS 123657 / FGSC 9075 / NRRL 31084 / PH-1</strain>
    </source>
</reference>
<reference key="4">
    <citation type="journal article" date="2007" name="Mol. Microbiol.">
        <title>Glucosylceramide synthase is essential for alfalfa defensin-mediated growth inhibition but not for pathogenicity of Fusarium graminearum.</title>
        <authorList>
            <person name="Ramamoorthy V."/>
            <person name="Cahoon E.B."/>
            <person name="Li J."/>
            <person name="Thokala M."/>
            <person name="Minto R.E."/>
            <person name="Shah D.M."/>
        </authorList>
    </citation>
    <scope>FUNCTION</scope>
    <scope>CATALYTIC ACTIVITY</scope>
    <scope>PATHWAY</scope>
    <scope>DISRUPTION PHENOTYPE</scope>
</reference>
<accession>I1RPI4</accession>
<accession>A0A0E0SQR3</accession>
<feature type="chain" id="PRO_0000434808" description="Ceramide glucosyltransferase">
    <location>
        <begin position="1"/>
        <end position="528"/>
    </location>
</feature>
<feature type="topological domain" description="Lumenal" evidence="7">
    <location>
        <begin position="1"/>
        <end position="6"/>
    </location>
</feature>
<feature type="transmembrane region" description="Helical" evidence="3">
    <location>
        <begin position="7"/>
        <end position="27"/>
    </location>
</feature>
<feature type="topological domain" description="Cytoplasmic" evidence="2">
    <location>
        <begin position="28"/>
        <end position="369"/>
    </location>
</feature>
<feature type="transmembrane region" description="Helical" evidence="3">
    <location>
        <begin position="370"/>
        <end position="390"/>
    </location>
</feature>
<feature type="topological domain" description="Lumenal" evidence="7">
    <location>
        <begin position="391"/>
        <end position="402"/>
    </location>
</feature>
<feature type="transmembrane region" description="Helical" evidence="3">
    <location>
        <begin position="403"/>
        <end position="423"/>
    </location>
</feature>
<feature type="topological domain" description="Cytoplasmic" evidence="7">
    <location>
        <begin position="424"/>
        <end position="457"/>
    </location>
</feature>
<feature type="transmembrane region" description="Helical" evidence="3">
    <location>
        <begin position="458"/>
        <end position="478"/>
    </location>
</feature>
<feature type="topological domain" description="Lumenal" evidence="7">
    <location>
        <begin position="479"/>
        <end position="528"/>
    </location>
</feature>
<feature type="region of interest" description="Disordered" evidence="4">
    <location>
        <begin position="503"/>
        <end position="528"/>
    </location>
</feature>
<feature type="short sequence motif" description="D1" evidence="7">
    <location>
        <position position="94"/>
    </location>
</feature>
<feature type="short sequence motif" description="D2" evidence="7">
    <location>
        <position position="154"/>
    </location>
</feature>
<feature type="short sequence motif" description="D3" evidence="7">
    <location>
        <position position="308"/>
    </location>
</feature>
<feature type="short sequence motif" description="(Q/R)XXRW" evidence="7">
    <location>
        <begin position="349"/>
        <end position="353"/>
    </location>
</feature>
<feature type="active site" description="Proton acceptor" evidence="2">
    <location>
        <position position="308"/>
    </location>
</feature>
<name>CEGT_GIBZE</name>
<evidence type="ECO:0000250" key="1">
    <source>
        <dbReference type="UniProtKB" id="Q16739"/>
    </source>
</evidence>
<evidence type="ECO:0000250" key="2">
    <source>
        <dbReference type="UniProtKB" id="Q9R0E0"/>
    </source>
</evidence>
<evidence type="ECO:0000255" key="3"/>
<evidence type="ECO:0000256" key="4">
    <source>
        <dbReference type="SAM" id="MobiDB-lite"/>
    </source>
</evidence>
<evidence type="ECO:0000269" key="5">
    <source>
    </source>
</evidence>
<evidence type="ECO:0000303" key="6">
    <source>
    </source>
</evidence>
<evidence type="ECO:0000305" key="7"/>
<evidence type="ECO:0000305" key="8">
    <source>
    </source>
</evidence>
<proteinExistence type="evidence at protein level"/>
<protein>
    <recommendedName>
        <fullName evidence="1">Ceramide glucosyltransferase</fullName>
        <ecNumber evidence="8">2.4.1.80</ecNumber>
    </recommendedName>
    <alternativeName>
        <fullName>GLCT-1</fullName>
    </alternativeName>
    <alternativeName>
        <fullName evidence="6">Glucosylceramide synthase</fullName>
        <shortName evidence="6">GCS</shortName>
    </alternativeName>
    <alternativeName>
        <fullName evidence="6">UDP-glucose ceramide glucosyltransferase</fullName>
    </alternativeName>
    <alternativeName>
        <fullName>UDP-glucose:N-acylsphingosine D-glucosyltransferase</fullName>
    </alternativeName>
</protein>
<keyword id="KW-0328">Glycosyltransferase</keyword>
<keyword id="KW-0333">Golgi apparatus</keyword>
<keyword id="KW-0443">Lipid metabolism</keyword>
<keyword id="KW-0472">Membrane</keyword>
<keyword id="KW-1185">Reference proteome</keyword>
<keyword id="KW-0746">Sphingolipid metabolism</keyword>
<keyword id="KW-0808">Transferase</keyword>
<keyword id="KW-0812">Transmembrane</keyword>
<keyword id="KW-1133">Transmembrane helix</keyword>
<comment type="function">
    <text evidence="5 8">Catalyzes the final step in the biosynthesis of the membrane lipid glucosylceramide (GluCer), the transfer of glucose to ceramide (Probable). Glucosylceramides play important roles in growth, differentiation and pathogenicity. Contribution to fungal pathogenesis is host-dependent (PubMed:17908205).</text>
</comment>
<comment type="catalytic activity">
    <reaction evidence="8">
        <text>an N-acylsphing-4-enine + UDP-alpha-D-glucose = a beta-D-glucosyl-(1&lt;-&gt;1')-N-acylsphing-4-enine + UDP + H(+)</text>
        <dbReference type="Rhea" id="RHEA:12088"/>
        <dbReference type="ChEBI" id="CHEBI:15378"/>
        <dbReference type="ChEBI" id="CHEBI:22801"/>
        <dbReference type="ChEBI" id="CHEBI:52639"/>
        <dbReference type="ChEBI" id="CHEBI:58223"/>
        <dbReference type="ChEBI" id="CHEBI:58885"/>
        <dbReference type="EC" id="2.4.1.80"/>
    </reaction>
</comment>
<comment type="pathway">
    <text evidence="8">Lipid metabolism; sphingolipid metabolism.</text>
</comment>
<comment type="subcellular location">
    <subcellularLocation>
        <location evidence="2">Golgi apparatus membrane</location>
        <topology evidence="3">Multi-pass membrane protein</topology>
    </subcellularLocation>
</comment>
<comment type="domain">
    <text evidence="2">The D1, D2, D3, (Q/R)XXRW motif is a critical part of the GCS active site, involved in catalysis and UDP-sugar binding.</text>
</comment>
<comment type="disruption phenotype">
    <text evidence="5">Results in complete loss of glucosylceramides (GluCers) in mutant cells. Shows a significant change in the conidial morphology and displays a dramatic polar growth defect, and its mycelia are resistant to cell wall degrading enzymes. Shows increased resistance to plant defensins MsDef1 and RsAFP2, but not MsDef4.</text>
</comment>
<comment type="similarity">
    <text evidence="7">Belongs to the glycosyltransferase 2 family.</text>
</comment>
<gene>
    <name evidence="6" type="primary">GCS1</name>
    <name type="ORF">FGRRES_05955</name>
    <name type="ORF">FGSG_05955</name>
</gene>
<organism>
    <name type="scientific">Gibberella zeae (strain ATCC MYA-4620 / CBS 123657 / FGSC 9075 / NRRL 31084 / PH-1)</name>
    <name type="common">Wheat head blight fungus</name>
    <name type="synonym">Fusarium graminearum</name>
    <dbReference type="NCBI Taxonomy" id="229533"/>
    <lineage>
        <taxon>Eukaryota</taxon>
        <taxon>Fungi</taxon>
        <taxon>Dikarya</taxon>
        <taxon>Ascomycota</taxon>
        <taxon>Pezizomycotina</taxon>
        <taxon>Sordariomycetes</taxon>
        <taxon>Hypocreomycetidae</taxon>
        <taxon>Hypocreales</taxon>
        <taxon>Nectriaceae</taxon>
        <taxon>Fusarium</taxon>
    </lineage>
</organism>